<gene>
    <name evidence="19" type="primary">TRI11</name>
</gene>
<dbReference type="EC" id="1.-.-.-" evidence="17"/>
<dbReference type="EMBL" id="AF011355">
    <property type="protein sequence ID" value="AAD12755.1"/>
    <property type="molecule type" value="Genomic_DNA"/>
</dbReference>
<dbReference type="EMBL" id="AF359360">
    <property type="protein sequence ID" value="AAK33070.1"/>
    <property type="molecule type" value="Genomic_DNA"/>
</dbReference>
<dbReference type="SMR" id="O13317"/>
<dbReference type="GlyCosmos" id="O13317">
    <property type="glycosylation" value="3 sites, No reported glycans"/>
</dbReference>
<dbReference type="BioCyc" id="MetaCyc:MONOMER-19576"/>
<dbReference type="UniPathway" id="UPA00267"/>
<dbReference type="GO" id="GO:0016020">
    <property type="term" value="C:membrane"/>
    <property type="evidence" value="ECO:0007669"/>
    <property type="project" value="UniProtKB-SubCell"/>
</dbReference>
<dbReference type="GO" id="GO:0020037">
    <property type="term" value="F:heme binding"/>
    <property type="evidence" value="ECO:0007669"/>
    <property type="project" value="InterPro"/>
</dbReference>
<dbReference type="GO" id="GO:0005506">
    <property type="term" value="F:iron ion binding"/>
    <property type="evidence" value="ECO:0007669"/>
    <property type="project" value="InterPro"/>
</dbReference>
<dbReference type="GO" id="GO:0004497">
    <property type="term" value="F:monooxygenase activity"/>
    <property type="evidence" value="ECO:0007669"/>
    <property type="project" value="UniProtKB-KW"/>
</dbReference>
<dbReference type="GO" id="GO:0016705">
    <property type="term" value="F:oxidoreductase activity, acting on paired donors, with incorporation or reduction of molecular oxygen"/>
    <property type="evidence" value="ECO:0007669"/>
    <property type="project" value="InterPro"/>
</dbReference>
<dbReference type="CDD" id="cd11058">
    <property type="entry name" value="CYP60B-like"/>
    <property type="match status" value="1"/>
</dbReference>
<dbReference type="Gene3D" id="1.10.630.10">
    <property type="entry name" value="Cytochrome P450"/>
    <property type="match status" value="1"/>
</dbReference>
<dbReference type="InterPro" id="IPR001128">
    <property type="entry name" value="Cyt_P450"/>
</dbReference>
<dbReference type="InterPro" id="IPR017972">
    <property type="entry name" value="Cyt_P450_CS"/>
</dbReference>
<dbReference type="InterPro" id="IPR002401">
    <property type="entry name" value="Cyt_P450_E_grp-I"/>
</dbReference>
<dbReference type="InterPro" id="IPR036396">
    <property type="entry name" value="Cyt_P450_sf"/>
</dbReference>
<dbReference type="InterPro" id="IPR050121">
    <property type="entry name" value="Cytochrome_P450_monoxygenase"/>
</dbReference>
<dbReference type="PANTHER" id="PTHR24305">
    <property type="entry name" value="CYTOCHROME P450"/>
    <property type="match status" value="1"/>
</dbReference>
<dbReference type="PANTHER" id="PTHR24305:SF230">
    <property type="entry name" value="P450, PUTATIVE (EUROFUNG)-RELATED"/>
    <property type="match status" value="1"/>
</dbReference>
<dbReference type="Pfam" id="PF00067">
    <property type="entry name" value="p450"/>
    <property type="match status" value="1"/>
</dbReference>
<dbReference type="PRINTS" id="PR00463">
    <property type="entry name" value="EP450I"/>
</dbReference>
<dbReference type="PRINTS" id="PR00385">
    <property type="entry name" value="P450"/>
</dbReference>
<dbReference type="SUPFAM" id="SSF48264">
    <property type="entry name" value="Cytochrome P450"/>
    <property type="match status" value="1"/>
</dbReference>
<dbReference type="PROSITE" id="PS00086">
    <property type="entry name" value="CYTOCHROME_P450"/>
    <property type="match status" value="1"/>
</dbReference>
<name>TRI11_FUSSP</name>
<protein>
    <recommendedName>
        <fullName evidence="19">Trichothecene C-15 hydroxylase</fullName>
        <ecNumber evidence="17">1.-.-.-</ecNumber>
    </recommendedName>
    <alternativeName>
        <fullName evidence="18">Core trichothecene cluster (CTC) protein 11</fullName>
    </alternativeName>
    <alternativeName>
        <fullName evidence="19">Cytochrome P450 monooxygenase TRI11</fullName>
    </alternativeName>
</protein>
<sequence length="492" mass="55580">MFQYSLWPLLALSGGTGLAYLVVVVVYNLFFHPLRNFPGPWLNSITQVPHTLLMLCGLPHKKHLALHMKYGPVVRIGPNMLSFNHPDAMKDVRGHRKSGEPEHGKDPISVQSNGDNIVGSDRENHTRFRRALAYGFSAQAMLEQEPTFKAYVNQLFQRLHEQSSGGTKPVDISKWYTFTTFDMIGDLAFGESFSCLDNSTYHPWVSLAFESLKSLAFLAEIGRYPRIAPYLGLLVPRGLLTKFAENKELASMKVRKRLDTETDRPDFVGKITQGLKSKGTSMEFNELASNASVLIVAGSETTATLLSAAVYFLCAHPRTLDLLTKEVRSTYTQAHDIDLVSTQGLRYMQAVLDEALRMYPPVAGGGSPRKIAKGGSFVAGHFVPENTLVENDMWAMHYDPKYFTQPHDFIPERWLGDVRFANDRLDAVKPFSIGPRNCIGMNLAYAEMRMMLARTVWEFDIRLSEGSRNWYEESRVYLAWNKPPLNVYLIPR</sequence>
<organism>
    <name type="scientific">Fusarium sporotrichioides</name>
    <dbReference type="NCBI Taxonomy" id="5514"/>
    <lineage>
        <taxon>Eukaryota</taxon>
        <taxon>Fungi</taxon>
        <taxon>Dikarya</taxon>
        <taxon>Ascomycota</taxon>
        <taxon>Pezizomycotina</taxon>
        <taxon>Sordariomycetes</taxon>
        <taxon>Hypocreomycetidae</taxon>
        <taxon>Hypocreales</taxon>
        <taxon>Nectriaceae</taxon>
        <taxon>Fusarium</taxon>
    </lineage>
</organism>
<proteinExistence type="evidence at transcript level"/>
<feature type="chain" id="PRO_0000442367" description="Trichothecene C-15 hydroxylase">
    <location>
        <begin position="1"/>
        <end position="492"/>
    </location>
</feature>
<feature type="transmembrane region" description="Helical" evidence="2">
    <location>
        <begin position="6"/>
        <end position="26"/>
    </location>
</feature>
<feature type="region of interest" description="Disordered" evidence="4">
    <location>
        <begin position="88"/>
        <end position="116"/>
    </location>
</feature>
<feature type="compositionally biased region" description="Basic and acidic residues" evidence="4">
    <location>
        <begin position="88"/>
        <end position="106"/>
    </location>
</feature>
<feature type="binding site" description="axial binding residue" evidence="1">
    <location>
        <position position="438"/>
    </location>
    <ligand>
        <name>heme</name>
        <dbReference type="ChEBI" id="CHEBI:30413"/>
    </ligand>
    <ligandPart>
        <name>Fe</name>
        <dbReference type="ChEBI" id="CHEBI:18248"/>
    </ligandPart>
</feature>
<feature type="glycosylation site" description="N-linked (GlcNAc...) asparagine" evidence="3">
    <location>
        <position position="124"/>
    </location>
</feature>
<feature type="glycosylation site" description="N-linked (GlcNAc...) asparagine" evidence="3">
    <location>
        <position position="198"/>
    </location>
</feature>
<feature type="glycosylation site" description="N-linked (GlcNAc...) asparagine" evidence="3">
    <location>
        <position position="290"/>
    </location>
</feature>
<keyword id="KW-0325">Glycoprotein</keyword>
<keyword id="KW-0349">Heme</keyword>
<keyword id="KW-0408">Iron</keyword>
<keyword id="KW-0472">Membrane</keyword>
<keyword id="KW-0479">Metal-binding</keyword>
<keyword id="KW-0503">Monooxygenase</keyword>
<keyword id="KW-0560">Oxidoreductase</keyword>
<keyword id="KW-0812">Transmembrane</keyword>
<keyword id="KW-1133">Transmembrane helix</keyword>
<reference key="1">
    <citation type="journal article" date="1998" name="Appl. Environ. Microbiol.">
        <title>The TRI11 gene of Fusarium sporotrichioides encodes a cytochrome P-450 monooxygenase required for C-15 hydroxylation in trichothecene biosynthesis.</title>
        <authorList>
            <person name="Alexander N.J."/>
            <person name="Hohn T.M."/>
            <person name="McCormick S.P."/>
        </authorList>
    </citation>
    <scope>FUNCTION</scope>
    <scope>DISRUPTION PHENOTYPE</scope>
    <scope>PATHWAY</scope>
</reference>
<reference key="2">
    <citation type="journal article" date="2001" name="Fungal Genet. Biol.">
        <title>A genetic and biochemical approach to study trichothecene diversity in Fusarium sporotrichioides and Fusarium graminearum.</title>
        <authorList>
            <person name="Brown D.W."/>
            <person name="McCormick S.P."/>
            <person name="Alexander N.J."/>
            <person name="Proctor R.H."/>
            <person name="Desjardins A.E."/>
        </authorList>
    </citation>
    <scope>NUCLEOTIDE SEQUENCE [GENOMIC DNA]</scope>
    <scope>FUNCTION</scope>
    <source>
        <strain>ATCC 24631 / NRRL 3299</strain>
    </source>
</reference>
<reference key="3">
    <citation type="journal article" date="1986" name="Arch. Biochem. Biophys.">
        <title>Purification and characterization of the sesquiterpene cyclase trichodiene synthetase from Fusarium sporotrichioides.</title>
        <authorList>
            <person name="Hohn T.M."/>
            <person name="Vanmiddlesworth F."/>
        </authorList>
    </citation>
    <scope>FUNCTION</scope>
</reference>
<reference key="4">
    <citation type="journal article" date="1990" name="Appl. Environ. Microbiol.">
        <title>Bioconversion of possible T-2 toxin precursors by a mutant strain of Fusarium sporotrichioides NRRL 3299.</title>
        <authorList>
            <person name="McCormick S.P."/>
            <person name="Taylor S.L."/>
            <person name="Plattner R.D."/>
            <person name="Beremand M.N."/>
        </authorList>
    </citation>
    <scope>FUNCTION</scope>
</reference>
<reference key="5">
    <citation type="journal article" date="1995" name="Mol. Gen. Genet.">
        <title>The Tri4 gene of Fusarium sporotrichioides encodes a cytochrome P450 monooxygenase involved in trichothecene biosynthesis.</title>
        <authorList>
            <person name="Hohn T.M."/>
            <person name="Desjardins A.E."/>
            <person name="McCormick S.P."/>
        </authorList>
    </citation>
    <scope>FUNCTION</scope>
</reference>
<reference key="6">
    <citation type="journal article" date="1996" name="Appl. Environ. Microbiol.">
        <title>Isolation and characterization of Tri3, a gene encoding 15-O-acetyltransferase from Fusarium sporotrichioides.</title>
        <authorList>
            <person name="McCormick S.P."/>
            <person name="Hohn T.M."/>
            <person name="Desjardins A.E."/>
        </authorList>
    </citation>
    <scope>FUNCTION</scope>
</reference>
<reference key="7">
    <citation type="journal article" date="1999" name="Appl. Environ. Microbiol.">
        <title>Disruption of TRI101, the gene encoding trichothecene 3-O-acetyltransferase, from Fusarium sporotrichioides.</title>
        <authorList>
            <person name="McCormick S.P."/>
            <person name="Alexander N.J."/>
            <person name="Trapp S.E."/>
            <person name="Hohn T.M."/>
        </authorList>
    </citation>
    <scope>FUNCTION</scope>
</reference>
<reference key="8">
    <citation type="journal article" date="2002" name="Appl. Environ. Microbiol.">
        <title>Fusarium Tri8 encodes a trichothecene C-3 esterase.</title>
        <authorList>
            <person name="McCormick S.P."/>
            <person name="Alexander N.J."/>
        </authorList>
    </citation>
    <scope>FUNCTION</scope>
</reference>
<reference key="9">
    <citation type="journal article" date="2002" name="Fungal Genet. Biol.">
        <title>Inactivation of a cytochrome P-450 is a determinant of trichothecene diversity in Fusarium species.</title>
        <authorList>
            <person name="Brown D.W."/>
            <person name="McCormick S.P."/>
            <person name="Alexander N.J."/>
            <person name="Proctor R.H."/>
            <person name="Desjardins A.E."/>
        </authorList>
    </citation>
    <scope>FUNCTION</scope>
</reference>
<reference key="10">
    <citation type="journal article" date="2003" name="Appl. Environ. Microbiol.">
        <title>Tri1 encodes the cytochrome P450 monooxygenase for C-8 hydroxylation during trichothecene biosynthesis in Fusarium sporotrichioides and resides upstream of another new Tri gene.</title>
        <authorList>
            <person name="Meek I.B."/>
            <person name="Peplow A.W."/>
            <person name="Ake C. Jr."/>
            <person name="Phillips T.D."/>
            <person name="Beremand M.N."/>
        </authorList>
    </citation>
    <scope>FUNCTION</scope>
</reference>
<reference key="11">
    <citation type="journal article" date="2003" name="Appl. Environ. Microbiol.">
        <title>Identification of new genes positively regulated by Tri10 and a regulatory network for trichothecene mycotoxin production.</title>
        <authorList>
            <person name="Peplow A.W."/>
            <person name="Tag A.G."/>
            <person name="Garifullina G.F."/>
            <person name="Beremand M.N."/>
        </authorList>
    </citation>
    <scope>INDUCTION</scope>
</reference>
<reference key="12">
    <citation type="journal article" date="2003" name="Appl. Environ. Microbiol.">
        <title>Tri16 is required for esterification of position C-8 during trichothecene mycotoxin production by Fusarium sporotrichioides.</title>
        <authorList>
            <person name="Peplow A.W."/>
            <person name="Meek I.B."/>
            <person name="Wiles M.C."/>
            <person name="Phillips T.D."/>
            <person name="Beremand M.N."/>
        </authorList>
    </citation>
    <scope>FUNCTION</scope>
</reference>
<reference key="13">
    <citation type="journal article" date="2006" name="Can. J. Microbiol.">
        <title>Fusarium Tri4 encodes a multifunctional oxygenase required for trichothecene biosynthesis.</title>
        <authorList>
            <person name="McCormick S.P."/>
            <person name="Alexander N.J."/>
            <person name="Proctor R.H."/>
        </authorList>
    </citation>
    <scope>FUNCTION</scope>
</reference>
<accession>O13317</accession>
<accession>Q7LP66</accession>
<evidence type="ECO:0000250" key="1">
    <source>
        <dbReference type="UniProtKB" id="P04798"/>
    </source>
</evidence>
<evidence type="ECO:0000255" key="2"/>
<evidence type="ECO:0000255" key="3">
    <source>
        <dbReference type="PROSITE-ProRule" id="PRU00498"/>
    </source>
</evidence>
<evidence type="ECO:0000256" key="4">
    <source>
        <dbReference type="SAM" id="MobiDB-lite"/>
    </source>
</evidence>
<evidence type="ECO:0000269" key="5">
    <source>
    </source>
</evidence>
<evidence type="ECO:0000269" key="6">
    <source>
    </source>
</evidence>
<evidence type="ECO:0000269" key="7">
    <source>
    </source>
</evidence>
<evidence type="ECO:0000269" key="8">
    <source>
    </source>
</evidence>
<evidence type="ECO:0000269" key="9">
    <source>
    </source>
</evidence>
<evidence type="ECO:0000269" key="10">
    <source>
    </source>
</evidence>
<evidence type="ECO:0000269" key="11">
    <source>
    </source>
</evidence>
<evidence type="ECO:0000269" key="12">
    <source>
    </source>
</evidence>
<evidence type="ECO:0000269" key="13">
    <source>
    </source>
</evidence>
<evidence type="ECO:0000269" key="14">
    <source>
    </source>
</evidence>
<evidence type="ECO:0000269" key="15">
    <source>
    </source>
</evidence>
<evidence type="ECO:0000269" key="16">
    <source>
    </source>
</evidence>
<evidence type="ECO:0000269" key="17">
    <source>
    </source>
</evidence>
<evidence type="ECO:0000303" key="18">
    <source>
    </source>
</evidence>
<evidence type="ECO:0000303" key="19">
    <source>
    </source>
</evidence>
<evidence type="ECO:0000305" key="20"/>
<comment type="function">
    <text evidence="5 6 7 8 9 11 12 13 14 15 16 17">Trichothecene C-15 hydroxylase; part of the core gene cluster that mediates the biosynthesis of trichothecenes, a very large family of chemically related bicyclic sesquiterpene compounds acting as mycotoxins, including T2-toxin (PubMed:11352533, PubMed:9435078). The biosynthesis of trichothecenes begins with the cyclization of farnesyl diphosphate to trichodiene and is catalyzed by the trichodiene synthase TRI5 (PubMed:3800398). Trichodiene undergoes a series of oxygenations catalyzed by the cytochrome P450 monooxygenase TRI4 (PubMed:7651333). TRI4 controls the addition of four oxygens at C-2, C-3, C-11, and the C-12, C-13-epoxide to form the intermediate isotrichotriol (PubMed:16917519). Isotrichotriol then undergoes a non-enzymatic isomerization and cyclization to form isotrichodermol (PubMed:2317042). During this process, the oxygen at the C-2 position becomes the pyran ring oxygen and the hydroxyl group at C-11 is lost (PubMed:2317042). More complex type A trichothecenes are built by modifying isotrichodermol through a series of paired hydroxylation and acetylation or acylation steps (PubMed:11352533). Isotrichodermol is converted to isotrichodermin by the acetyltransferase TRI101 (PubMed:10583973). TRI101 encodes a C-3 transacetylase that acts as a self-protection or resistance factor during biosynthesis and that the presence of a free C-3 hydroxyl group is a key component of Fusarium trichothecene phytotoxicity (PubMed:10583973). A second hydroxyl group is added to C-15 by the trichothecene C-15 hydroxylase TRI11, producing 15-decalonectrin, which is then acetylated by TRI3, producing calonectrin (PubMed:8593041, PubMed:9435078). A third hydroxyl group is added at C-4 by the cytochrome P450 monooxygenase TRI13, converting calonectrin to 3,15-diacetoxyspirpenol, which is subsequently acetylated by the acetyltransferase TRI7 (PubMed:11352533, PubMed:12135578). A fourth hydroxyl group is added to C-8 by the cytochrome P450 monooxygenase TRI1, followed by the addition of an isovaleryl moiety by TRI16 (PubMed:12620849, PubMed:14532047). Finally, the acetyl group is removed from the C-3 position by the trichothecene C-3 esterase TRI8 to produce T-2 toxin (PubMed:12039755).</text>
</comment>
<comment type="cofactor">
    <cofactor evidence="1">
        <name>heme</name>
        <dbReference type="ChEBI" id="CHEBI:30413"/>
    </cofactor>
</comment>
<comment type="pathway">
    <text evidence="17">Sesquiterpene biosynthesis; trichothecene biosynthesis.</text>
</comment>
<comment type="subcellular location">
    <subcellularLocation>
        <location evidence="2">Membrane</location>
        <topology evidence="2">Single-pass membrane protein</topology>
    </subcellularLocation>
</comment>
<comment type="induction">
    <text evidence="10">Expression is positively regulated by the trichothecene cluster-specific transcription activator TRI10 (PubMed:12732543).</text>
</comment>
<comment type="disruption phenotype">
    <text evidence="17">Leads to the accumulation of isotrichodermin, a trichothecene pathway intermediate (PubMed:9435078).</text>
</comment>
<comment type="miscellaneous">
    <text evidence="20">Trichothecenes are sesquiterpenoid toxins that act by inhibiting protein biosynthesis.</text>
</comment>
<comment type="similarity">
    <text evidence="20">Belongs to the cytochrome P450 family.</text>
</comment>